<dbReference type="EMBL" id="CR555306">
    <property type="protein sequence ID" value="CAI08663.1"/>
    <property type="molecule type" value="Genomic_DNA"/>
</dbReference>
<dbReference type="RefSeq" id="WP_011238347.1">
    <property type="nucleotide sequence ID" value="NC_006513.1"/>
</dbReference>
<dbReference type="SMR" id="Q5P201"/>
<dbReference type="STRING" id="76114.ebD83"/>
<dbReference type="KEGG" id="eba:ebD83"/>
<dbReference type="eggNOG" id="COG2127">
    <property type="taxonomic scope" value="Bacteria"/>
</dbReference>
<dbReference type="HOGENOM" id="CLU_134358_2_1_4"/>
<dbReference type="OrthoDB" id="9796121at2"/>
<dbReference type="Proteomes" id="UP000006552">
    <property type="component" value="Chromosome"/>
</dbReference>
<dbReference type="GO" id="GO:0030163">
    <property type="term" value="P:protein catabolic process"/>
    <property type="evidence" value="ECO:0007669"/>
    <property type="project" value="InterPro"/>
</dbReference>
<dbReference type="GO" id="GO:0006508">
    <property type="term" value="P:proteolysis"/>
    <property type="evidence" value="ECO:0007669"/>
    <property type="project" value="UniProtKB-UniRule"/>
</dbReference>
<dbReference type="FunFam" id="3.30.1390.10:FF:000002">
    <property type="entry name" value="ATP-dependent Clp protease adapter protein ClpS"/>
    <property type="match status" value="1"/>
</dbReference>
<dbReference type="Gene3D" id="3.30.1390.10">
    <property type="match status" value="1"/>
</dbReference>
<dbReference type="HAMAP" id="MF_00302">
    <property type="entry name" value="ClpS"/>
    <property type="match status" value="1"/>
</dbReference>
<dbReference type="InterPro" id="IPR022935">
    <property type="entry name" value="ClpS"/>
</dbReference>
<dbReference type="InterPro" id="IPR003769">
    <property type="entry name" value="ClpS_core"/>
</dbReference>
<dbReference type="InterPro" id="IPR014719">
    <property type="entry name" value="Ribosomal_bL12_C/ClpS-like"/>
</dbReference>
<dbReference type="NCBIfam" id="NF000672">
    <property type="entry name" value="PRK00033.1-5"/>
    <property type="match status" value="1"/>
</dbReference>
<dbReference type="PANTHER" id="PTHR33473:SF19">
    <property type="entry name" value="ATP-DEPENDENT CLP PROTEASE ADAPTER PROTEIN CLPS"/>
    <property type="match status" value="1"/>
</dbReference>
<dbReference type="PANTHER" id="PTHR33473">
    <property type="entry name" value="ATP-DEPENDENT CLP PROTEASE ADAPTER PROTEIN CLPS1, CHLOROPLASTIC"/>
    <property type="match status" value="1"/>
</dbReference>
<dbReference type="Pfam" id="PF02617">
    <property type="entry name" value="ClpS"/>
    <property type="match status" value="1"/>
</dbReference>
<dbReference type="SUPFAM" id="SSF54736">
    <property type="entry name" value="ClpS-like"/>
    <property type="match status" value="1"/>
</dbReference>
<protein>
    <recommendedName>
        <fullName evidence="1">ATP-dependent Clp protease adapter protein ClpS</fullName>
    </recommendedName>
</protein>
<keyword id="KW-1185">Reference proteome</keyword>
<comment type="function">
    <text evidence="1">Involved in the modulation of the specificity of the ClpAP-mediated ATP-dependent protein degradation.</text>
</comment>
<comment type="subunit">
    <text evidence="1">Binds to the N-terminal domain of the chaperone ClpA.</text>
</comment>
<comment type="similarity">
    <text evidence="1">Belongs to the ClpS family.</text>
</comment>
<evidence type="ECO:0000255" key="1">
    <source>
        <dbReference type="HAMAP-Rule" id="MF_00302"/>
    </source>
</evidence>
<name>CLPS_AROAE</name>
<feature type="chain" id="PRO_0000215683" description="ATP-dependent Clp protease adapter protein ClpS">
    <location>
        <begin position="1"/>
        <end position="102"/>
    </location>
</feature>
<gene>
    <name evidence="1" type="primary">clpS</name>
    <name type="ordered locus">AZOSEA25380</name>
    <name type="ORF">ebD83</name>
</gene>
<organism>
    <name type="scientific">Aromatoleum aromaticum (strain DSM 19018 / LMG 30748 / EbN1)</name>
    <name type="common">Azoarcus sp. (strain EbN1)</name>
    <dbReference type="NCBI Taxonomy" id="76114"/>
    <lineage>
        <taxon>Bacteria</taxon>
        <taxon>Pseudomonadati</taxon>
        <taxon>Pseudomonadota</taxon>
        <taxon>Betaproteobacteria</taxon>
        <taxon>Rhodocyclales</taxon>
        <taxon>Rhodocyclaceae</taxon>
        <taxon>Aromatoleum</taxon>
    </lineage>
</organism>
<sequence>MATQKQDEFLLETEQTRTKPPPLYKVLLLNDDFTPMDFVIVVLQKFFGMDRERATRVMLQVHREGMGVCGVFPKDVAATKVEQVVAFARQHQHPLACVMEEN</sequence>
<reference key="1">
    <citation type="journal article" date="2005" name="Arch. Microbiol.">
        <title>The genome sequence of an anaerobic aromatic-degrading denitrifying bacterium, strain EbN1.</title>
        <authorList>
            <person name="Rabus R."/>
            <person name="Kube M."/>
            <person name="Heider J."/>
            <person name="Beck A."/>
            <person name="Heitmann K."/>
            <person name="Widdel F."/>
            <person name="Reinhardt R."/>
        </authorList>
    </citation>
    <scope>NUCLEOTIDE SEQUENCE [LARGE SCALE GENOMIC DNA]</scope>
    <source>
        <strain>DSM 19018 / LMG 30748 / EbN1</strain>
    </source>
</reference>
<accession>Q5P201</accession>
<proteinExistence type="inferred from homology"/>